<feature type="transit peptide" description="Chloroplast" evidence="4">
    <location>
        <begin position="1"/>
        <end position="149"/>
    </location>
</feature>
<feature type="chain" id="PRO_0000023841" description="Cytochrome f, chloroplastic">
    <location>
        <begin position="150"/>
        <end position="496"/>
    </location>
</feature>
<feature type="transmembrane region" description="Helical" evidence="3">
    <location>
        <begin position="462"/>
        <end position="481"/>
    </location>
</feature>
<feature type="binding site" description="axial binding residue" evidence="1">
    <location>
        <position position="150"/>
    </location>
    <ligand>
        <name>heme</name>
        <dbReference type="ChEBI" id="CHEBI:30413"/>
    </ligand>
    <ligandPart>
        <name>Fe</name>
        <dbReference type="ChEBI" id="CHEBI:18248"/>
    </ligandPart>
</feature>
<feature type="binding site" description="covalent" evidence="1">
    <location>
        <position position="170"/>
    </location>
    <ligand>
        <name>heme</name>
        <dbReference type="ChEBI" id="CHEBI:30413"/>
    </ligand>
</feature>
<feature type="binding site" description="covalent" evidence="1">
    <location>
        <position position="173"/>
    </location>
    <ligand>
        <name>heme</name>
        <dbReference type="ChEBI" id="CHEBI:30413"/>
    </ligand>
</feature>
<feature type="binding site" description="axial binding residue" evidence="1">
    <location>
        <position position="174"/>
    </location>
    <ligand>
        <name>heme</name>
        <dbReference type="ChEBI" id="CHEBI:30413"/>
    </ligand>
    <ligandPart>
        <name>Fe</name>
        <dbReference type="ChEBI" id="CHEBI:18248"/>
    </ligandPart>
</feature>
<gene>
    <name type="primary">petA</name>
</gene>
<reference evidence="5" key="1">
    <citation type="journal article" date="2003" name="Biochim. Biophys. Acta">
        <title>Cytochrome f and subunit IV, two essential components of the photosynthetic bf complex typically encoded in the chloroplast genome, are nucleus-encoded in Euglena gracilis.</title>
        <authorList>
            <person name="Santillan Torres J.L."/>
            <person name="Atteia A."/>
            <person name="Claros M.G."/>
            <person name="Gonzalez-Halphen D."/>
        </authorList>
    </citation>
    <scope>NUCLEOTIDE SEQUENCE [MRNA]</scope>
    <scope>PROTEIN SEQUENCE OF 150-174</scope>
    <scope>SUBCELLULAR LOCATION</scope>
</reference>
<sequence length="496" mass="52366">MASLQTPVMVGTVVGCVAGVVGFLAMSSNAATSLSVAPASTSTQIIANPSVIAPQYQGSVTSEDVAMEASQTDFAEVAEISSPVQVQSWSMIFSAMLAVPLAAAAMFFMKKSTTEERRPLVSIDDLLSVGKKAVVASAVVGAAAGSANAYPIFAQQAYGNPREATGRIVCANCHLASKPTEIEVPQAVLPDQVFEAVTKVPFSGPSGFFNVVDPSTVVGSVTFAGTQPVGFIQESGVPVSQALVDIATPGTPDTVFKATIKVPYDESLKQVAGNGRAAPLNVGAVLILPEGFRLAPPERIPEKMKEEINGLQFIQYSKDTPNILVVGPVPGKKYAEMTVALLSPDPRVDKKAEFGTLPIYVGGNRGRGQLYPTGEKSNNNIYNVEHSGKIADIQLNEKKRIYTVAVQQKDGEIINEDLPAGAELIVKVGDVVEAGQAISTNPNVGGFGQAESEIVLQNPGRVQAFLFFSFTVLATQTLLVVKKKQYEQVQLSEMNF</sequence>
<accession>Q8GZR2</accession>
<proteinExistence type="evidence at protein level"/>
<name>CYF_EUGGR</name>
<evidence type="ECO:0000250" key="1"/>
<evidence type="ECO:0000250" key="2">
    <source>
        <dbReference type="UniProtKB" id="P23577"/>
    </source>
</evidence>
<evidence type="ECO:0000255" key="3"/>
<evidence type="ECO:0000269" key="4">
    <source>
    </source>
</evidence>
<evidence type="ECO:0000305" key="5"/>
<evidence type="ECO:0000312" key="6">
    <source>
        <dbReference type="EMBL" id="AAO13958.1"/>
    </source>
</evidence>
<protein>
    <recommendedName>
        <fullName>Cytochrome f, chloroplastic</fullName>
    </recommendedName>
</protein>
<keyword id="KW-0150">Chloroplast</keyword>
<keyword id="KW-0903">Direct protein sequencing</keyword>
<keyword id="KW-0249">Electron transport</keyword>
<keyword id="KW-0349">Heme</keyword>
<keyword id="KW-0408">Iron</keyword>
<keyword id="KW-0472">Membrane</keyword>
<keyword id="KW-0479">Metal-binding</keyword>
<keyword id="KW-0602">Photosynthesis</keyword>
<keyword id="KW-0603">Photosystem I</keyword>
<keyword id="KW-0604">Photosystem II</keyword>
<keyword id="KW-0934">Plastid</keyword>
<keyword id="KW-0793">Thylakoid</keyword>
<keyword id="KW-0809">Transit peptide</keyword>
<keyword id="KW-0812">Transmembrane</keyword>
<keyword id="KW-1133">Transmembrane helix</keyword>
<keyword id="KW-0813">Transport</keyword>
<comment type="function">
    <text evidence="2">Translocates protons across the thylakoid membrane and transfers electrons from photosystem II to photosystem I. It receives electrons from the Rieske iron-sulfur protein and passes them to plastocyanin.</text>
</comment>
<comment type="cofactor">
    <cofactor evidence="1">
        <name>heme</name>
        <dbReference type="ChEBI" id="CHEBI:30413"/>
    </cofactor>
    <text evidence="1">Binds 1 heme group covalently.</text>
</comment>
<comment type="subunit">
    <text evidence="2">Interacts with plastocyanin and Rieske iron-sulfur protein.</text>
</comment>
<comment type="subcellular location">
    <subcellularLocation>
        <location evidence="4">Plastid</location>
        <location evidence="4">Chloroplast thylakoid membrane</location>
        <topology evidence="4">Single-pass membrane protein</topology>
    </subcellularLocation>
</comment>
<comment type="miscellaneous">
    <text evidence="4">This polypeptide is nuclear encoded in Euglena gracilis, but is chloroplast encoded in other plant species.</text>
</comment>
<comment type="similarity">
    <text evidence="5">Belongs to the cytochrome f family.</text>
</comment>
<comment type="sequence caution" evidence="5">
    <conflict type="erroneous initiation">
        <sequence resource="EMBL-CDS" id="AAO13958"/>
    </conflict>
</comment>
<dbReference type="EMBL" id="AF443625">
    <property type="protein sequence ID" value="AAO13958.1"/>
    <property type="status" value="ALT_INIT"/>
    <property type="molecule type" value="mRNA"/>
</dbReference>
<dbReference type="SMR" id="Q8GZR2"/>
<dbReference type="GO" id="GO:0009507">
    <property type="term" value="C:chloroplast"/>
    <property type="evidence" value="ECO:0000314"/>
    <property type="project" value="UniProtKB"/>
</dbReference>
<dbReference type="GO" id="GO:0009535">
    <property type="term" value="C:chloroplast thylakoid membrane"/>
    <property type="evidence" value="ECO:0007669"/>
    <property type="project" value="UniProtKB-SubCell"/>
</dbReference>
<dbReference type="GO" id="GO:0009522">
    <property type="term" value="C:photosystem I"/>
    <property type="evidence" value="ECO:0007669"/>
    <property type="project" value="UniProtKB-KW"/>
</dbReference>
<dbReference type="GO" id="GO:0009523">
    <property type="term" value="C:photosystem II"/>
    <property type="evidence" value="ECO:0007669"/>
    <property type="project" value="UniProtKB-KW"/>
</dbReference>
<dbReference type="GO" id="GO:0009055">
    <property type="term" value="F:electron transfer activity"/>
    <property type="evidence" value="ECO:0007669"/>
    <property type="project" value="InterPro"/>
</dbReference>
<dbReference type="GO" id="GO:0020037">
    <property type="term" value="F:heme binding"/>
    <property type="evidence" value="ECO:0007669"/>
    <property type="project" value="InterPro"/>
</dbReference>
<dbReference type="GO" id="GO:0005506">
    <property type="term" value="F:iron ion binding"/>
    <property type="evidence" value="ECO:0007669"/>
    <property type="project" value="InterPro"/>
</dbReference>
<dbReference type="GO" id="GO:0015979">
    <property type="term" value="P:photosynthesis"/>
    <property type="evidence" value="ECO:0007669"/>
    <property type="project" value="UniProtKB-KW"/>
</dbReference>
<dbReference type="FunFam" id="2.60.40.830:FF:000004">
    <property type="entry name" value="Cytochrome f, chloroplastic"/>
    <property type="match status" value="1"/>
</dbReference>
<dbReference type="Gene3D" id="2.40.50.100">
    <property type="match status" value="1"/>
</dbReference>
<dbReference type="Gene3D" id="2.60.40.830">
    <property type="entry name" value="Cytochrome f large domain"/>
    <property type="match status" value="2"/>
</dbReference>
<dbReference type="Gene3D" id="1.20.5.700">
    <property type="entry name" value="Single helix bin"/>
    <property type="match status" value="1"/>
</dbReference>
<dbReference type="InterPro" id="IPR024058">
    <property type="entry name" value="Cyt-f_TM"/>
</dbReference>
<dbReference type="InterPro" id="IPR002325">
    <property type="entry name" value="Cyt_f"/>
</dbReference>
<dbReference type="InterPro" id="IPR024094">
    <property type="entry name" value="Cyt_f_lg_dom"/>
</dbReference>
<dbReference type="InterPro" id="IPR036826">
    <property type="entry name" value="Cyt_f_lg_dom_sf"/>
</dbReference>
<dbReference type="InterPro" id="IPR011054">
    <property type="entry name" value="Rudment_hybrid_motif"/>
</dbReference>
<dbReference type="PANTHER" id="PTHR33288">
    <property type="match status" value="1"/>
</dbReference>
<dbReference type="PANTHER" id="PTHR33288:SF10">
    <property type="entry name" value="CYTOCHROME F"/>
    <property type="match status" value="1"/>
</dbReference>
<dbReference type="Pfam" id="PF01333">
    <property type="entry name" value="Apocytochr_F_C"/>
    <property type="match status" value="1"/>
</dbReference>
<dbReference type="Pfam" id="PF16639">
    <property type="entry name" value="Apocytochr_F_N"/>
    <property type="match status" value="2"/>
</dbReference>
<dbReference type="PRINTS" id="PR00610">
    <property type="entry name" value="CYTOCHROMEF"/>
</dbReference>
<dbReference type="SUPFAM" id="SSF103431">
    <property type="entry name" value="Cytochrome f subunit of the cytochrome b6f complex, transmembrane anchor"/>
    <property type="match status" value="1"/>
</dbReference>
<dbReference type="SUPFAM" id="SSF49441">
    <property type="entry name" value="Cytochrome f, large domain"/>
    <property type="match status" value="2"/>
</dbReference>
<dbReference type="SUPFAM" id="SSF51246">
    <property type="entry name" value="Rudiment single hybrid motif"/>
    <property type="match status" value="1"/>
</dbReference>
<dbReference type="PROSITE" id="PS51010">
    <property type="entry name" value="CYTF"/>
    <property type="match status" value="1"/>
</dbReference>
<organism evidence="6">
    <name type="scientific">Euglena gracilis</name>
    <dbReference type="NCBI Taxonomy" id="3039"/>
    <lineage>
        <taxon>Eukaryota</taxon>
        <taxon>Discoba</taxon>
        <taxon>Euglenozoa</taxon>
        <taxon>Euglenida</taxon>
        <taxon>Spirocuta</taxon>
        <taxon>Euglenophyceae</taxon>
        <taxon>Euglenales</taxon>
        <taxon>Euglenaceae</taxon>
        <taxon>Euglena</taxon>
    </lineage>
</organism>